<sequence>MSDKIIHLTDDSFDTDVLKADGAILVDFWAEWCGPCKMIAPILDEIADEYQGKLTVAKLNIDQNPGTAPKYGIRGIPTLLLFKNGEVAATKVGALSKGQLKEFLDANLA</sequence>
<dbReference type="EMBL" id="AL513382">
    <property type="protein sequence ID" value="CAD09400.1"/>
    <property type="molecule type" value="Genomic_DNA"/>
</dbReference>
<dbReference type="EMBL" id="AE014613">
    <property type="protein sequence ID" value="AAO70905.1"/>
    <property type="molecule type" value="Genomic_DNA"/>
</dbReference>
<dbReference type="RefSeq" id="NP_457831.1">
    <property type="nucleotide sequence ID" value="NC_003198.1"/>
</dbReference>
<dbReference type="RefSeq" id="WP_001280776.1">
    <property type="nucleotide sequence ID" value="NZ_WSUR01000032.1"/>
</dbReference>
<dbReference type="PDB" id="1M7T">
    <property type="method" value="NMR"/>
    <property type="chains" value="A=87-108"/>
</dbReference>
<dbReference type="PDBsum" id="1M7T"/>
<dbReference type="BMRB" id="P0AA29"/>
<dbReference type="SMR" id="P0AA29"/>
<dbReference type="STRING" id="220341.gene:17587495"/>
<dbReference type="GeneID" id="93778163"/>
<dbReference type="KEGG" id="stt:t3381"/>
<dbReference type="KEGG" id="sty:STY3639"/>
<dbReference type="PATRIC" id="fig|220341.7.peg.3708"/>
<dbReference type="eggNOG" id="COG3118">
    <property type="taxonomic scope" value="Bacteria"/>
</dbReference>
<dbReference type="HOGENOM" id="CLU_090389_10_2_6"/>
<dbReference type="OMA" id="HIHYVTD"/>
<dbReference type="OrthoDB" id="9790390at2"/>
<dbReference type="Proteomes" id="UP000000541">
    <property type="component" value="Chromosome"/>
</dbReference>
<dbReference type="Proteomes" id="UP000002670">
    <property type="component" value="Chromosome"/>
</dbReference>
<dbReference type="GO" id="GO:0005829">
    <property type="term" value="C:cytosol"/>
    <property type="evidence" value="ECO:0007669"/>
    <property type="project" value="TreeGrafter"/>
</dbReference>
<dbReference type="GO" id="GO:0015035">
    <property type="term" value="F:protein-disulfide reductase activity"/>
    <property type="evidence" value="ECO:0007669"/>
    <property type="project" value="InterPro"/>
</dbReference>
<dbReference type="GO" id="GO:0045454">
    <property type="term" value="P:cell redox homeostasis"/>
    <property type="evidence" value="ECO:0007669"/>
    <property type="project" value="TreeGrafter"/>
</dbReference>
<dbReference type="CDD" id="cd02947">
    <property type="entry name" value="TRX_family"/>
    <property type="match status" value="1"/>
</dbReference>
<dbReference type="FunFam" id="3.40.30.10:FF:000001">
    <property type="entry name" value="Thioredoxin"/>
    <property type="match status" value="1"/>
</dbReference>
<dbReference type="Gene3D" id="3.40.30.10">
    <property type="entry name" value="Glutaredoxin"/>
    <property type="match status" value="1"/>
</dbReference>
<dbReference type="InterPro" id="IPR005746">
    <property type="entry name" value="Thioredoxin"/>
</dbReference>
<dbReference type="InterPro" id="IPR036249">
    <property type="entry name" value="Thioredoxin-like_sf"/>
</dbReference>
<dbReference type="InterPro" id="IPR017937">
    <property type="entry name" value="Thioredoxin_CS"/>
</dbReference>
<dbReference type="InterPro" id="IPR013766">
    <property type="entry name" value="Thioredoxin_domain"/>
</dbReference>
<dbReference type="NCBIfam" id="NF006898">
    <property type="entry name" value="PRK09381.1"/>
    <property type="match status" value="1"/>
</dbReference>
<dbReference type="NCBIfam" id="TIGR01068">
    <property type="entry name" value="thioredoxin"/>
    <property type="match status" value="1"/>
</dbReference>
<dbReference type="PANTHER" id="PTHR45663">
    <property type="entry name" value="GEO12009P1"/>
    <property type="match status" value="1"/>
</dbReference>
<dbReference type="PANTHER" id="PTHR45663:SF11">
    <property type="entry name" value="GEO12009P1"/>
    <property type="match status" value="1"/>
</dbReference>
<dbReference type="Pfam" id="PF00085">
    <property type="entry name" value="Thioredoxin"/>
    <property type="match status" value="1"/>
</dbReference>
<dbReference type="PIRSF" id="PIRSF000077">
    <property type="entry name" value="Thioredoxin"/>
    <property type="match status" value="1"/>
</dbReference>
<dbReference type="PRINTS" id="PR00421">
    <property type="entry name" value="THIOREDOXIN"/>
</dbReference>
<dbReference type="SUPFAM" id="SSF52833">
    <property type="entry name" value="Thioredoxin-like"/>
    <property type="match status" value="1"/>
</dbReference>
<dbReference type="PROSITE" id="PS00194">
    <property type="entry name" value="THIOREDOXIN_1"/>
    <property type="match status" value="1"/>
</dbReference>
<dbReference type="PROSITE" id="PS51352">
    <property type="entry name" value="THIOREDOXIN_2"/>
    <property type="match status" value="1"/>
</dbReference>
<comment type="function">
    <text evidence="1">Participates in various redox reactions through the reversible oxidation of its active center dithiol to a disulfide and catalyzes dithiol-disulfide exchange reactions.</text>
</comment>
<comment type="subunit">
    <text evidence="1">Monomer.</text>
</comment>
<comment type="similarity">
    <text evidence="3">Belongs to the thioredoxin family.</text>
</comment>
<proteinExistence type="evidence at protein level"/>
<protein>
    <recommendedName>
        <fullName>Thioredoxin 1</fullName>
        <shortName>Trx-1</shortName>
    </recommendedName>
</protein>
<accession>P0AA29</accession>
<accession>P00274</accession>
<accession>P76750</accession>
<accession>Q47674</accession>
<accession>Q8XAT2</accession>
<reference key="1">
    <citation type="journal article" date="2001" name="Nature">
        <title>Complete genome sequence of a multiple drug resistant Salmonella enterica serovar Typhi CT18.</title>
        <authorList>
            <person name="Parkhill J."/>
            <person name="Dougan G."/>
            <person name="James K.D."/>
            <person name="Thomson N.R."/>
            <person name="Pickard D."/>
            <person name="Wain J."/>
            <person name="Churcher C.M."/>
            <person name="Mungall K.L."/>
            <person name="Bentley S.D."/>
            <person name="Holden M.T.G."/>
            <person name="Sebaihia M."/>
            <person name="Baker S."/>
            <person name="Basham D."/>
            <person name="Brooks K."/>
            <person name="Chillingworth T."/>
            <person name="Connerton P."/>
            <person name="Cronin A."/>
            <person name="Davis P."/>
            <person name="Davies R.M."/>
            <person name="Dowd L."/>
            <person name="White N."/>
            <person name="Farrar J."/>
            <person name="Feltwell T."/>
            <person name="Hamlin N."/>
            <person name="Haque A."/>
            <person name="Hien T.T."/>
            <person name="Holroyd S."/>
            <person name="Jagels K."/>
            <person name="Krogh A."/>
            <person name="Larsen T.S."/>
            <person name="Leather S."/>
            <person name="Moule S."/>
            <person name="O'Gaora P."/>
            <person name="Parry C."/>
            <person name="Quail M.A."/>
            <person name="Rutherford K.M."/>
            <person name="Simmonds M."/>
            <person name="Skelton J."/>
            <person name="Stevens K."/>
            <person name="Whitehead S."/>
            <person name="Barrell B.G."/>
        </authorList>
    </citation>
    <scope>NUCLEOTIDE SEQUENCE [LARGE SCALE GENOMIC DNA]</scope>
    <source>
        <strain>CT18</strain>
    </source>
</reference>
<reference key="2">
    <citation type="journal article" date="2003" name="J. Bacteriol.">
        <title>Comparative genomics of Salmonella enterica serovar Typhi strains Ty2 and CT18.</title>
        <authorList>
            <person name="Deng W."/>
            <person name="Liou S.-R."/>
            <person name="Plunkett G. III"/>
            <person name="Mayhew G.F."/>
            <person name="Rose D.J."/>
            <person name="Burland V."/>
            <person name="Kodoyianni V."/>
            <person name="Schwartz D.C."/>
            <person name="Blattner F.R."/>
        </authorList>
    </citation>
    <scope>NUCLEOTIDE SEQUENCE [LARGE SCALE GENOMIC DNA]</scope>
    <source>
        <strain>ATCC 700931 / Ty2</strain>
    </source>
</reference>
<gene>
    <name type="primary">trxA</name>
    <name type="ordered locus">STY3639</name>
    <name type="ordered locus">t3381</name>
</gene>
<evidence type="ECO:0000250" key="1"/>
<evidence type="ECO:0000255" key="2">
    <source>
        <dbReference type="PROSITE-ProRule" id="PRU00691"/>
    </source>
</evidence>
<evidence type="ECO:0000305" key="3"/>
<evidence type="ECO:0007829" key="4">
    <source>
        <dbReference type="PDB" id="1M7T"/>
    </source>
</evidence>
<organism>
    <name type="scientific">Salmonella typhi</name>
    <dbReference type="NCBI Taxonomy" id="90370"/>
    <lineage>
        <taxon>Bacteria</taxon>
        <taxon>Pseudomonadati</taxon>
        <taxon>Pseudomonadota</taxon>
        <taxon>Gammaproteobacteria</taxon>
        <taxon>Enterobacterales</taxon>
        <taxon>Enterobacteriaceae</taxon>
        <taxon>Salmonella</taxon>
    </lineage>
</organism>
<feature type="initiator methionine" description="Removed" evidence="1">
    <location>
        <position position="1"/>
    </location>
</feature>
<feature type="chain" id="PRO_0000120099" description="Thioredoxin 1">
    <location>
        <begin position="2"/>
        <end position="109"/>
    </location>
</feature>
<feature type="domain" description="Thioredoxin" evidence="2">
    <location>
        <begin position="2"/>
        <end position="109"/>
    </location>
</feature>
<feature type="active site" description="Nucleophile" evidence="1">
    <location>
        <position position="33"/>
    </location>
</feature>
<feature type="active site" description="Nucleophile" evidence="1">
    <location>
        <position position="36"/>
    </location>
</feature>
<feature type="site" description="Deprotonates C-terminal active site Cys" evidence="1">
    <location>
        <position position="27"/>
    </location>
</feature>
<feature type="site" description="Contributes to redox potential value" evidence="1">
    <location>
        <position position="34"/>
    </location>
</feature>
<feature type="site" description="Contributes to redox potential value" evidence="1">
    <location>
        <position position="35"/>
    </location>
</feature>
<feature type="disulfide bond" description="Redox-active" evidence="2">
    <location>
        <begin position="33"/>
        <end position="36"/>
    </location>
</feature>
<feature type="strand" evidence="4">
    <location>
        <begin position="75"/>
        <end position="83"/>
    </location>
</feature>
<feature type="strand" evidence="4">
    <location>
        <begin position="86"/>
        <end position="91"/>
    </location>
</feature>
<feature type="helix" evidence="4">
    <location>
        <begin position="97"/>
        <end position="107"/>
    </location>
</feature>
<name>THIO_SALTI</name>
<keyword id="KW-0002">3D-structure</keyword>
<keyword id="KW-1015">Disulfide bond</keyword>
<keyword id="KW-0249">Electron transport</keyword>
<keyword id="KW-0676">Redox-active center</keyword>
<keyword id="KW-0813">Transport</keyword>